<gene>
    <name evidence="1" type="primary">rplY</name>
    <name evidence="1" type="synonym">ctc</name>
    <name type="ordered locus">CTA_0871</name>
</gene>
<proteinExistence type="inferred from homology"/>
<sequence length="185" mass="20499">MELVVQSRETDKKSVIKKIRQQGGIPAVLYSGGKSLANIVVDARVFSKFLSTLESGALASTVFTLSYEGREIKALVKDIQYHVTTYDVIHLDFEELVDGRDVRLNIPIRYINTVDCVGVKLGGSLRQVIRCIRVVCKPKDIVPFLELDVQSLGLSQTLKLSDICIPEGIRPVTSLKEVAVTVARR</sequence>
<organism>
    <name type="scientific">Chlamydia trachomatis serovar A (strain ATCC VR-571B / DSM 19440 / HAR-13)</name>
    <dbReference type="NCBI Taxonomy" id="315277"/>
    <lineage>
        <taxon>Bacteria</taxon>
        <taxon>Pseudomonadati</taxon>
        <taxon>Chlamydiota</taxon>
        <taxon>Chlamydiia</taxon>
        <taxon>Chlamydiales</taxon>
        <taxon>Chlamydiaceae</taxon>
        <taxon>Chlamydia/Chlamydophila group</taxon>
        <taxon>Chlamydia</taxon>
    </lineage>
</organism>
<accession>Q3KKP2</accession>
<comment type="function">
    <text evidence="1">This is one of the proteins that binds to the 5S RNA in the ribosome where it forms part of the central protuberance.</text>
</comment>
<comment type="subunit">
    <text evidence="1">Part of the 50S ribosomal subunit; part of the 5S rRNA/L5/L18/L25 subcomplex. Contacts the 5S rRNA. Binds to the 5S rRNA independently of L5 and L18.</text>
</comment>
<comment type="similarity">
    <text evidence="1">Belongs to the bacterial ribosomal protein bL25 family. CTC subfamily.</text>
</comment>
<dbReference type="EMBL" id="CP000051">
    <property type="protein sequence ID" value="AAX51080.1"/>
    <property type="molecule type" value="Genomic_DNA"/>
</dbReference>
<dbReference type="RefSeq" id="WP_011324872.1">
    <property type="nucleotide sequence ID" value="NC_007429.1"/>
</dbReference>
<dbReference type="SMR" id="Q3KKP2"/>
<dbReference type="KEGG" id="cta:CTA_0871"/>
<dbReference type="HOGENOM" id="CLU_075939_2_1_0"/>
<dbReference type="Proteomes" id="UP000002532">
    <property type="component" value="Chromosome"/>
</dbReference>
<dbReference type="GO" id="GO:0022625">
    <property type="term" value="C:cytosolic large ribosomal subunit"/>
    <property type="evidence" value="ECO:0007669"/>
    <property type="project" value="TreeGrafter"/>
</dbReference>
<dbReference type="GO" id="GO:0008097">
    <property type="term" value="F:5S rRNA binding"/>
    <property type="evidence" value="ECO:0007669"/>
    <property type="project" value="InterPro"/>
</dbReference>
<dbReference type="GO" id="GO:0003735">
    <property type="term" value="F:structural constituent of ribosome"/>
    <property type="evidence" value="ECO:0007669"/>
    <property type="project" value="InterPro"/>
</dbReference>
<dbReference type="GO" id="GO:0006412">
    <property type="term" value="P:translation"/>
    <property type="evidence" value="ECO:0007669"/>
    <property type="project" value="UniProtKB-UniRule"/>
</dbReference>
<dbReference type="CDD" id="cd00495">
    <property type="entry name" value="Ribosomal_L25_TL5_CTC"/>
    <property type="match status" value="1"/>
</dbReference>
<dbReference type="FunFam" id="2.170.120.20:FF:000014">
    <property type="entry name" value="50S ribosomal protein L25"/>
    <property type="match status" value="1"/>
</dbReference>
<dbReference type="Gene3D" id="2.170.120.20">
    <property type="entry name" value="Ribosomal protein L25, beta domain"/>
    <property type="match status" value="1"/>
</dbReference>
<dbReference type="Gene3D" id="2.40.240.10">
    <property type="entry name" value="Ribosomal Protein L25, Chain P"/>
    <property type="match status" value="1"/>
</dbReference>
<dbReference type="HAMAP" id="MF_01334">
    <property type="entry name" value="Ribosomal_bL25_CTC"/>
    <property type="match status" value="1"/>
</dbReference>
<dbReference type="InterPro" id="IPR020056">
    <property type="entry name" value="Rbsml_bL25/Gln-tRNA_synth_N"/>
</dbReference>
<dbReference type="InterPro" id="IPR011035">
    <property type="entry name" value="Ribosomal_bL25/Gln-tRNA_synth"/>
</dbReference>
<dbReference type="InterPro" id="IPR020057">
    <property type="entry name" value="Ribosomal_bL25_b-dom"/>
</dbReference>
<dbReference type="InterPro" id="IPR037121">
    <property type="entry name" value="Ribosomal_bL25_C"/>
</dbReference>
<dbReference type="InterPro" id="IPR001021">
    <property type="entry name" value="Ribosomal_bL25_long"/>
</dbReference>
<dbReference type="InterPro" id="IPR029751">
    <property type="entry name" value="Ribosomal_L25_dom"/>
</dbReference>
<dbReference type="InterPro" id="IPR020930">
    <property type="entry name" value="Ribosomal_uL5_bac-type"/>
</dbReference>
<dbReference type="NCBIfam" id="TIGR00731">
    <property type="entry name" value="bL25_bact_ctc"/>
    <property type="match status" value="1"/>
</dbReference>
<dbReference type="NCBIfam" id="NF004129">
    <property type="entry name" value="PRK05618.1-4"/>
    <property type="match status" value="1"/>
</dbReference>
<dbReference type="PANTHER" id="PTHR33284">
    <property type="entry name" value="RIBOSOMAL PROTEIN L25/GLN-TRNA SYNTHETASE, ANTI-CODON-BINDING DOMAIN-CONTAINING PROTEIN"/>
    <property type="match status" value="1"/>
</dbReference>
<dbReference type="PANTHER" id="PTHR33284:SF1">
    <property type="entry name" value="RIBOSOMAL PROTEIN L25_GLN-TRNA SYNTHETASE, ANTI-CODON-BINDING DOMAIN-CONTAINING PROTEIN"/>
    <property type="match status" value="1"/>
</dbReference>
<dbReference type="Pfam" id="PF01386">
    <property type="entry name" value="Ribosomal_L25p"/>
    <property type="match status" value="1"/>
</dbReference>
<dbReference type="Pfam" id="PF14693">
    <property type="entry name" value="Ribosomal_TL5_C"/>
    <property type="match status" value="1"/>
</dbReference>
<dbReference type="SUPFAM" id="SSF50715">
    <property type="entry name" value="Ribosomal protein L25-like"/>
    <property type="match status" value="1"/>
</dbReference>
<protein>
    <recommendedName>
        <fullName evidence="1">Large ribosomal subunit protein bL25</fullName>
    </recommendedName>
    <alternativeName>
        <fullName evidence="2">50S ribosomal protein L25</fullName>
    </alternativeName>
    <alternativeName>
        <fullName evidence="1">General stress protein CTC</fullName>
    </alternativeName>
</protein>
<evidence type="ECO:0000255" key="1">
    <source>
        <dbReference type="HAMAP-Rule" id="MF_01334"/>
    </source>
</evidence>
<evidence type="ECO:0000305" key="2"/>
<name>RL25_CHLTA</name>
<reference key="1">
    <citation type="journal article" date="2005" name="Infect. Immun.">
        <title>Comparative genomic analysis of Chlamydia trachomatis oculotropic and genitotropic strains.</title>
        <authorList>
            <person name="Carlson J.H."/>
            <person name="Porcella S.F."/>
            <person name="McClarty G."/>
            <person name="Caldwell H.D."/>
        </authorList>
    </citation>
    <scope>NUCLEOTIDE SEQUENCE [LARGE SCALE GENOMIC DNA]</scope>
    <source>
        <strain>ATCC VR-571B / DSM 19440 / HAR-13</strain>
    </source>
</reference>
<keyword id="KW-0687">Ribonucleoprotein</keyword>
<keyword id="KW-0689">Ribosomal protein</keyword>
<keyword id="KW-0694">RNA-binding</keyword>
<keyword id="KW-0699">rRNA-binding</keyword>
<feature type="chain" id="PRO_0000244199" description="Large ribosomal subunit protein bL25">
    <location>
        <begin position="1"/>
        <end position="185"/>
    </location>
</feature>